<organism>
    <name type="scientific">Rattus norvegicus</name>
    <name type="common">Rat</name>
    <dbReference type="NCBI Taxonomy" id="10116"/>
    <lineage>
        <taxon>Eukaryota</taxon>
        <taxon>Metazoa</taxon>
        <taxon>Chordata</taxon>
        <taxon>Craniata</taxon>
        <taxon>Vertebrata</taxon>
        <taxon>Euteleostomi</taxon>
        <taxon>Mammalia</taxon>
        <taxon>Eutheria</taxon>
        <taxon>Euarchontoglires</taxon>
        <taxon>Glires</taxon>
        <taxon>Rodentia</taxon>
        <taxon>Myomorpha</taxon>
        <taxon>Muroidea</taxon>
        <taxon>Muridae</taxon>
        <taxon>Murinae</taxon>
        <taxon>Rattus</taxon>
    </lineage>
</organism>
<feature type="initiator methionine" description="Removed" evidence="5">
    <location>
        <position position="1"/>
    </location>
</feature>
<feature type="chain" id="PRO_0000191657" description="Rab3 GTPase-activating protein catalytic subunit">
    <location>
        <begin position="2"/>
        <end position="775"/>
    </location>
</feature>
<feature type="region of interest" description="Disordered" evidence="3">
    <location>
        <begin position="324"/>
        <end position="351"/>
    </location>
</feature>
<feature type="region of interest" description="Disordered" evidence="3">
    <location>
        <begin position="386"/>
        <end position="414"/>
    </location>
</feature>
<feature type="modified residue" description="Phosphoserine" evidence="1">
    <location>
        <position position="173"/>
    </location>
</feature>
<feature type="modified residue" description="Phosphoserine" evidence="1">
    <location>
        <position position="330"/>
    </location>
</feature>
<feature type="modified residue" description="Phosphoserine" evidence="2">
    <location>
        <position position="373"/>
    </location>
</feature>
<feature type="modified residue" description="Phosphoserine" evidence="2">
    <location>
        <position position="375"/>
    </location>
</feature>
<feature type="modified residue" description="Phosphoserine" evidence="1">
    <location>
        <position position="384"/>
    </location>
</feature>
<feature type="modified residue" description="Phosphoserine" evidence="1">
    <location>
        <position position="458"/>
    </location>
</feature>
<feature type="non-consecutive residues" evidence="7">
    <location>
        <begin position="11"/>
        <end position="12"/>
    </location>
</feature>
<keyword id="KW-0963">Cytoplasm</keyword>
<keyword id="KW-0903">Direct protein sequencing</keyword>
<keyword id="KW-0256">Endoplasmic reticulum</keyword>
<keyword id="KW-0333">Golgi apparatus</keyword>
<keyword id="KW-0343">GTPase activation</keyword>
<keyword id="KW-0597">Phosphoprotein</keyword>
<keyword id="KW-1185">Reference proteome</keyword>
<protein>
    <recommendedName>
        <fullName>Rab3 GTPase-activating protein catalytic subunit</fullName>
    </recommendedName>
    <alternativeName>
        <fullName>RAB3 GTPase-activating protein 130 kDa subunit</fullName>
    </alternativeName>
    <alternativeName>
        <fullName>Rab3-GAP p130</fullName>
        <shortName>Rab3-GAP</shortName>
    </alternativeName>
</protein>
<dbReference type="EMBL" id="AABR03085327">
    <property type="status" value="NOT_ANNOTATED_CDS"/>
    <property type="molecule type" value="Genomic_DNA"/>
</dbReference>
<dbReference type="EMBL" id="AABR03086784">
    <property type="status" value="NOT_ANNOTATED_CDS"/>
    <property type="molecule type" value="Genomic_DNA"/>
</dbReference>
<dbReference type="FunCoup" id="P69735">
    <property type="interactions" value="3803"/>
</dbReference>
<dbReference type="IntAct" id="P69735">
    <property type="interactions" value="1"/>
</dbReference>
<dbReference type="STRING" id="10116.ENSRNOP00000070191"/>
<dbReference type="iPTMnet" id="P69735"/>
<dbReference type="PhosphoSitePlus" id="P69735"/>
<dbReference type="SwissPalm" id="P69735"/>
<dbReference type="jPOST" id="P69735"/>
<dbReference type="PaxDb" id="10116-ENSRNOP00000005289"/>
<dbReference type="AGR" id="RGD:1306487"/>
<dbReference type="RGD" id="1306487">
    <property type="gene designation" value="Rab3gap1"/>
</dbReference>
<dbReference type="eggNOG" id="KOG2390">
    <property type="taxonomic scope" value="Eukaryota"/>
</dbReference>
<dbReference type="InParanoid" id="P69735"/>
<dbReference type="PhylomeDB" id="P69735"/>
<dbReference type="Reactome" id="R-RNO-6811436">
    <property type="pathway name" value="COPI-independent Golgi-to-ER retrograde traffic"/>
</dbReference>
<dbReference type="Reactome" id="R-RNO-8876198">
    <property type="pathway name" value="RAB GEFs exchange GTP for GDP on RABs"/>
</dbReference>
<dbReference type="Proteomes" id="UP000002494">
    <property type="component" value="Unplaced"/>
</dbReference>
<dbReference type="GO" id="GO:0005801">
    <property type="term" value="C:cis-Golgi network"/>
    <property type="evidence" value="ECO:0000250"/>
    <property type="project" value="UniProtKB"/>
</dbReference>
<dbReference type="GO" id="GO:0005737">
    <property type="term" value="C:cytoplasm"/>
    <property type="evidence" value="ECO:0000250"/>
    <property type="project" value="ParkinsonsUK-UCL"/>
</dbReference>
<dbReference type="GO" id="GO:0071782">
    <property type="term" value="C:endoplasmic reticulum tubular network"/>
    <property type="evidence" value="ECO:0000250"/>
    <property type="project" value="ParkinsonsUK-UCL"/>
</dbReference>
<dbReference type="GO" id="GO:0060076">
    <property type="term" value="C:excitatory synapse"/>
    <property type="evidence" value="ECO:0000314"/>
    <property type="project" value="BHF-UCL"/>
</dbReference>
<dbReference type="GO" id="GO:0005794">
    <property type="term" value="C:Golgi apparatus"/>
    <property type="evidence" value="ECO:0000266"/>
    <property type="project" value="RGD"/>
</dbReference>
<dbReference type="GO" id="GO:0005811">
    <property type="term" value="C:lipid droplet"/>
    <property type="evidence" value="ECO:0000266"/>
    <property type="project" value="RGD"/>
</dbReference>
<dbReference type="GO" id="GO:0098794">
    <property type="term" value="C:postsynapse"/>
    <property type="evidence" value="ECO:0007669"/>
    <property type="project" value="GOC"/>
</dbReference>
<dbReference type="GO" id="GO:0032991">
    <property type="term" value="C:protein-containing complex"/>
    <property type="evidence" value="ECO:0000250"/>
    <property type="project" value="ParkinsonsUK-UCL"/>
</dbReference>
<dbReference type="GO" id="GO:0005096">
    <property type="term" value="F:GTPase activator activity"/>
    <property type="evidence" value="ECO:0000314"/>
    <property type="project" value="UniProtKB"/>
</dbReference>
<dbReference type="GO" id="GO:0005085">
    <property type="term" value="F:guanyl-nucleotide exchange factor activity"/>
    <property type="evidence" value="ECO:0000250"/>
    <property type="project" value="UniProtKB"/>
</dbReference>
<dbReference type="GO" id="GO:0031267">
    <property type="term" value="F:small GTPase binding"/>
    <property type="evidence" value="ECO:0000250"/>
    <property type="project" value="ParkinsonsUK-UCL"/>
</dbReference>
<dbReference type="GO" id="GO:0007420">
    <property type="term" value="P:brain development"/>
    <property type="evidence" value="ECO:0000266"/>
    <property type="project" value="RGD"/>
</dbReference>
<dbReference type="GO" id="GO:0043010">
    <property type="term" value="P:camera-type eye development"/>
    <property type="evidence" value="ECO:0000266"/>
    <property type="project" value="RGD"/>
</dbReference>
<dbReference type="GO" id="GO:0097051">
    <property type="term" value="P:establishment of protein localization to endoplasmic reticulum membrane"/>
    <property type="evidence" value="ECO:0000250"/>
    <property type="project" value="ParkinsonsUK-UCL"/>
</dbReference>
<dbReference type="GO" id="GO:0060079">
    <property type="term" value="P:excitatory postsynaptic potential"/>
    <property type="evidence" value="ECO:0000250"/>
    <property type="project" value="ParkinsonsUK-UCL"/>
</dbReference>
<dbReference type="GO" id="GO:0060325">
    <property type="term" value="P:face morphogenesis"/>
    <property type="evidence" value="ECO:0000266"/>
    <property type="project" value="RGD"/>
</dbReference>
<dbReference type="GO" id="GO:0021854">
    <property type="term" value="P:hypothalamus development"/>
    <property type="evidence" value="ECO:0000266"/>
    <property type="project" value="RGD"/>
</dbReference>
<dbReference type="GO" id="GO:0034389">
    <property type="term" value="P:lipid droplet organization"/>
    <property type="evidence" value="ECO:0000250"/>
    <property type="project" value="ParkinsonsUK-UCL"/>
</dbReference>
<dbReference type="GO" id="GO:2000786">
    <property type="term" value="P:positive regulation of autophagosome assembly"/>
    <property type="evidence" value="ECO:0000250"/>
    <property type="project" value="GO_Central"/>
</dbReference>
<dbReference type="GO" id="GO:1903373">
    <property type="term" value="P:positive regulation of endoplasmic reticulum tubular network organization"/>
    <property type="evidence" value="ECO:0000250"/>
    <property type="project" value="ParkinsonsUK-UCL"/>
</dbReference>
<dbReference type="GO" id="GO:0010628">
    <property type="term" value="P:positive regulation of gene expression"/>
    <property type="evidence" value="ECO:0000266"/>
    <property type="project" value="RGD"/>
</dbReference>
<dbReference type="GO" id="GO:0061646">
    <property type="term" value="P:positive regulation of glutamate neurotransmitter secretion in response to membrane depolarization"/>
    <property type="evidence" value="ECO:0000250"/>
    <property type="project" value="ParkinsonsUK-UCL"/>
</dbReference>
<dbReference type="GO" id="GO:1903061">
    <property type="term" value="P:positive regulation of protein lipidation"/>
    <property type="evidence" value="ECO:0000250"/>
    <property type="project" value="GO_Central"/>
</dbReference>
<dbReference type="GO" id="GO:1903233">
    <property type="term" value="P:regulation of calcium ion-dependent exocytosis of neurotransmitter"/>
    <property type="evidence" value="ECO:0000250"/>
    <property type="project" value="ParkinsonsUK-UCL"/>
</dbReference>
<dbReference type="GO" id="GO:0032483">
    <property type="term" value="P:regulation of Rab protein signal transduction"/>
    <property type="evidence" value="ECO:0000250"/>
    <property type="project" value="ParkinsonsUK-UCL"/>
</dbReference>
<dbReference type="GO" id="GO:0048172">
    <property type="term" value="P:regulation of short-term neuronal synaptic plasticity"/>
    <property type="evidence" value="ECO:0000250"/>
    <property type="project" value="ParkinsonsUK-UCL"/>
</dbReference>
<dbReference type="InterPro" id="IPR045700">
    <property type="entry name" value="Rab3GAP1"/>
</dbReference>
<dbReference type="InterPro" id="IPR045698">
    <property type="entry name" value="Rab3GAP1_C"/>
</dbReference>
<dbReference type="InterPro" id="IPR026147">
    <property type="entry name" value="Rab3GAP1_conserved"/>
</dbReference>
<dbReference type="PANTHER" id="PTHR21422">
    <property type="entry name" value="RAB3 GTPASE-ACTIVATING PROTEIN CATALYTIC SUBUNIT"/>
    <property type="match status" value="1"/>
</dbReference>
<dbReference type="PANTHER" id="PTHR21422:SF9">
    <property type="entry name" value="RAB3 GTPASE-ACTIVATING PROTEIN CATALYTIC SUBUNIT"/>
    <property type="match status" value="1"/>
</dbReference>
<dbReference type="Pfam" id="PF19533">
    <property type="entry name" value="Rab3-GAP_cat_C"/>
    <property type="match status" value="1"/>
</dbReference>
<dbReference type="Pfam" id="PF13890">
    <property type="entry name" value="Rab3-GTPase_cat"/>
    <property type="match status" value="1"/>
</dbReference>
<accession>P69735</accession>
<proteinExistence type="evidence at protein level"/>
<reference key="1">
    <citation type="journal article" date="1997" name="J. Biol. Chem.">
        <title>Isolation and characterization of a GTPase activating protein specific for the Rab3 subfamily of small G proteins.</title>
        <authorList>
            <person name="Fukui K."/>
            <person name="Sasaki T."/>
            <person name="Imazumi K."/>
            <person name="Matsuura Y."/>
            <person name="Nakanishi H."/>
            <person name="Takai Y."/>
        </authorList>
    </citation>
    <scope>PROTEIN SEQUENCE OF 2-11; 161-171; 404-419 AND 539-557</scope>
    <source>
        <tissue>Brain</tissue>
    </source>
</reference>
<reference key="2">
    <citation type="journal article" date="2004" name="Nature">
        <title>Genome sequence of the Brown Norway rat yields insights into mammalian evolution.</title>
        <authorList>
            <person name="Gibbs R.A."/>
            <person name="Weinstock G.M."/>
            <person name="Metzker M.L."/>
            <person name="Muzny D.M."/>
            <person name="Sodergren E.J."/>
            <person name="Scherer S."/>
            <person name="Scott G."/>
            <person name="Steffen D."/>
            <person name="Worley K.C."/>
            <person name="Burch P.E."/>
            <person name="Okwuonu G."/>
            <person name="Hines S."/>
            <person name="Lewis L."/>
            <person name="Deramo C."/>
            <person name="Delgado O."/>
            <person name="Dugan-Rocha S."/>
            <person name="Miner G."/>
            <person name="Morgan M."/>
            <person name="Hawes A."/>
            <person name="Gill R."/>
            <person name="Holt R.A."/>
            <person name="Adams M.D."/>
            <person name="Amanatides P.G."/>
            <person name="Baden-Tillson H."/>
            <person name="Barnstead M."/>
            <person name="Chin S."/>
            <person name="Evans C.A."/>
            <person name="Ferriera S."/>
            <person name="Fosler C."/>
            <person name="Glodek A."/>
            <person name="Gu Z."/>
            <person name="Jennings D."/>
            <person name="Kraft C.L."/>
            <person name="Nguyen T."/>
            <person name="Pfannkoch C.M."/>
            <person name="Sitter C."/>
            <person name="Sutton G.G."/>
            <person name="Venter J.C."/>
            <person name="Woodage T."/>
            <person name="Smith D."/>
            <person name="Lee H.-M."/>
            <person name="Gustafson E."/>
            <person name="Cahill P."/>
            <person name="Kana A."/>
            <person name="Doucette-Stamm L."/>
            <person name="Weinstock K."/>
            <person name="Fechtel K."/>
            <person name="Weiss R.B."/>
            <person name="Dunn D.M."/>
            <person name="Green E.D."/>
            <person name="Blakesley R.W."/>
            <person name="Bouffard G.G."/>
            <person name="De Jong P.J."/>
            <person name="Osoegawa K."/>
            <person name="Zhu B."/>
            <person name="Marra M."/>
            <person name="Schein J."/>
            <person name="Bosdet I."/>
            <person name="Fjell C."/>
            <person name="Jones S."/>
            <person name="Krzywinski M."/>
            <person name="Mathewson C."/>
            <person name="Siddiqui A."/>
            <person name="Wye N."/>
            <person name="McPherson J."/>
            <person name="Zhao S."/>
            <person name="Fraser C.M."/>
            <person name="Shetty J."/>
            <person name="Shatsman S."/>
            <person name="Geer K."/>
            <person name="Chen Y."/>
            <person name="Abramzon S."/>
            <person name="Nierman W.C."/>
            <person name="Havlak P.H."/>
            <person name="Chen R."/>
            <person name="Durbin K.J."/>
            <person name="Egan A."/>
            <person name="Ren Y."/>
            <person name="Song X.-Z."/>
            <person name="Li B."/>
            <person name="Liu Y."/>
            <person name="Qin X."/>
            <person name="Cawley S."/>
            <person name="Cooney A.J."/>
            <person name="D'Souza L.M."/>
            <person name="Martin K."/>
            <person name="Wu J.Q."/>
            <person name="Gonzalez-Garay M.L."/>
            <person name="Jackson A.R."/>
            <person name="Kalafus K.J."/>
            <person name="McLeod M.P."/>
            <person name="Milosavljevic A."/>
            <person name="Virk D."/>
            <person name="Volkov A."/>
            <person name="Wheeler D.A."/>
            <person name="Zhang Z."/>
            <person name="Bailey J.A."/>
            <person name="Eichler E.E."/>
            <person name="Tuzun E."/>
            <person name="Birney E."/>
            <person name="Mongin E."/>
            <person name="Ureta-Vidal A."/>
            <person name="Woodwark C."/>
            <person name="Zdobnov E."/>
            <person name="Bork P."/>
            <person name="Suyama M."/>
            <person name="Torrents D."/>
            <person name="Alexandersson M."/>
            <person name="Trask B.J."/>
            <person name="Young J.M."/>
            <person name="Huang H."/>
            <person name="Wang H."/>
            <person name="Xing H."/>
            <person name="Daniels S."/>
            <person name="Gietzen D."/>
            <person name="Schmidt J."/>
            <person name="Stevens K."/>
            <person name="Vitt U."/>
            <person name="Wingrove J."/>
            <person name="Camara F."/>
            <person name="Mar Alba M."/>
            <person name="Abril J.F."/>
            <person name="Guigo R."/>
            <person name="Smit A."/>
            <person name="Dubchak I."/>
            <person name="Rubin E.M."/>
            <person name="Couronne O."/>
            <person name="Poliakov A."/>
            <person name="Huebner N."/>
            <person name="Ganten D."/>
            <person name="Goesele C."/>
            <person name="Hummel O."/>
            <person name="Kreitler T."/>
            <person name="Lee Y.-A."/>
            <person name="Monti J."/>
            <person name="Schulz H."/>
            <person name="Zimdahl H."/>
            <person name="Himmelbauer H."/>
            <person name="Lehrach H."/>
            <person name="Jacob H.J."/>
            <person name="Bromberg S."/>
            <person name="Gullings-Handley J."/>
            <person name="Jensen-Seaman M.I."/>
            <person name="Kwitek A.E."/>
            <person name="Lazar J."/>
            <person name="Pasko D."/>
            <person name="Tonellato P.J."/>
            <person name="Twigger S."/>
            <person name="Ponting C.P."/>
            <person name="Duarte J.M."/>
            <person name="Rice S."/>
            <person name="Goodstadt L."/>
            <person name="Beatson S.A."/>
            <person name="Emes R.D."/>
            <person name="Winter E.E."/>
            <person name="Webber C."/>
            <person name="Brandt P."/>
            <person name="Nyakatura G."/>
            <person name="Adetobi M."/>
            <person name="Chiaromonte F."/>
            <person name="Elnitski L."/>
            <person name="Eswara P."/>
            <person name="Hardison R.C."/>
            <person name="Hou M."/>
            <person name="Kolbe D."/>
            <person name="Makova K."/>
            <person name="Miller W."/>
            <person name="Nekrutenko A."/>
            <person name="Riemer C."/>
            <person name="Schwartz S."/>
            <person name="Taylor J."/>
            <person name="Yang S."/>
            <person name="Zhang Y."/>
            <person name="Lindpaintner K."/>
            <person name="Andrews T.D."/>
            <person name="Caccamo M."/>
            <person name="Clamp M."/>
            <person name="Clarke L."/>
            <person name="Curwen V."/>
            <person name="Durbin R.M."/>
            <person name="Eyras E."/>
            <person name="Searle S.M."/>
            <person name="Cooper G.M."/>
            <person name="Batzoglou S."/>
            <person name="Brudno M."/>
            <person name="Sidow A."/>
            <person name="Stone E.A."/>
            <person name="Payseur B.A."/>
            <person name="Bourque G."/>
            <person name="Lopez-Otin C."/>
            <person name="Puente X.S."/>
            <person name="Chakrabarti K."/>
            <person name="Chatterji S."/>
            <person name="Dewey C."/>
            <person name="Pachter L."/>
            <person name="Bray N."/>
            <person name="Yap V.B."/>
            <person name="Caspi A."/>
            <person name="Tesler G."/>
            <person name="Pevzner P.A."/>
            <person name="Haussler D."/>
            <person name="Roskin K.M."/>
            <person name="Baertsch R."/>
            <person name="Clawson H."/>
            <person name="Furey T.S."/>
            <person name="Hinrichs A.S."/>
            <person name="Karolchik D."/>
            <person name="Kent W.J."/>
            <person name="Rosenbloom K.R."/>
            <person name="Trumbower H."/>
            <person name="Weirauch M."/>
            <person name="Cooper D.N."/>
            <person name="Stenson P.D."/>
            <person name="Ma B."/>
            <person name="Brent M."/>
            <person name="Arumugam M."/>
            <person name="Shteynberg D."/>
            <person name="Copley R.R."/>
            <person name="Taylor M.S."/>
            <person name="Riethman H."/>
            <person name="Mudunuri U."/>
            <person name="Peterson J."/>
            <person name="Guyer M."/>
            <person name="Felsenfeld A."/>
            <person name="Old S."/>
            <person name="Mockrin S."/>
            <person name="Collins F.S."/>
        </authorList>
    </citation>
    <scope>NUCLEOTIDE SEQUENCE [LARGE SCALE GENOMIC DNA] OF 12-775</scope>
    <source>
        <strain>Brown Norway</strain>
    </source>
</reference>
<reference key="3">
    <citation type="journal article" date="1998" name="J. Biol. Chem.">
        <title>Molecular cloning and characterization of the noncatalytic subunit of the Rab3 subfamily-specific GTPase-activating protein.</title>
        <authorList>
            <person name="Nagano F."/>
            <person name="Sasaki T."/>
            <person name="Fukui K."/>
            <person name="Asakura T."/>
            <person name="Imazumi K."/>
            <person name="Takai Y."/>
        </authorList>
    </citation>
    <scope>SUBCELLULAR LOCATION</scope>
    <scope>INTERACTION WITH RAB3GAP2</scope>
</reference>
<reference key="4">
    <citation type="journal article" date="2002" name="J. Biol. Chem.">
        <title>Rabconnectin-3, a novel protein that binds both GDP/GTP exchange protein and GTPase-activating protein for Rab3 small G protein family.</title>
        <authorList>
            <person name="Nagano F."/>
            <person name="Kawabe H."/>
            <person name="Nakanishi H."/>
            <person name="Shinohara M."/>
            <person name="Deguchi-Tawarada M."/>
            <person name="Takeuchi M."/>
            <person name="Sasaki T."/>
            <person name="Takai Y."/>
        </authorList>
    </citation>
    <scope>INTERACTION WITH DMXL2</scope>
</reference>
<evidence type="ECO:0000250" key="1">
    <source>
        <dbReference type="UniProtKB" id="Q15042"/>
    </source>
</evidence>
<evidence type="ECO:0000250" key="2">
    <source>
        <dbReference type="UniProtKB" id="Q80UJ7"/>
    </source>
</evidence>
<evidence type="ECO:0000256" key="3">
    <source>
        <dbReference type="SAM" id="MobiDB-lite"/>
    </source>
</evidence>
<evidence type="ECO:0000269" key="4">
    <source>
    </source>
</evidence>
<evidence type="ECO:0000269" key="5">
    <source>
    </source>
</evidence>
<evidence type="ECO:0000269" key="6">
    <source>
    </source>
</evidence>
<evidence type="ECO:0000305" key="7"/>
<evidence type="ECO:0000312" key="8">
    <source>
        <dbReference type="RGD" id="1306487"/>
    </source>
</evidence>
<sequence length="775" mass="86587">MAADSEPESEVGCPLTPLPPVSIAIRFTYVLQDWQQYFWPQQPPDIDALVGGEVGGLEFGKLPFGACEDPISELHLATTWPHLTEGIIVDNDVYSDLDPVQAPHWSVRVRKADNPQCLLGDFVTEFLKICRRKESTDEILGRSTFEEEGRVADITHALSKLTEPAPVPIHKLSVSNMVHTAKKKIRKHRGEESPLNNDVLNTILLFLFPDAASEKPLDGTTSVDNSNPAAEAGDYTLYNQFKSAPSDSLTYKLALCLCMINFYHGGLKGVAHLWQEFVLEMRFRWENNFLIPGLASGPPDLRCCLLHQKLQMLNCCIERKKARDEGKKTSPSDSMTKAYPADAGKAGGQLGLDHLRDTEKEKGEAGKSWDSWSDSEEEFFECLSDAEDLRGNGQESTKKGGPKDMAPLKPEGRLHQHGKLTLLRNGEPLYIPVTQEPAPMTEDLLEEQSEVLAKLGTSAEGAHLRARMQSACLLSDMESFKAANPGCCLEDFVRWYSPRDYIEEEVTDEKGNVVLKGELSARMKIPSNMWVEAWETAKPVPARRQRRLFDDTREAEKVLHYLAMQKPADLARHLLPCVIHAAVLKVKEEESLENIPSVKKIIKQIIAHSSKVLRFPSPEDKKLEEIILQITTVEAIIARARSLKAKFGTEKCEHEEEKEDLERFVSCLLEQPEVAVTGAGRGHAGRIIHKLFVNAQRAAAVALPEEELKRSGCPEERRQTLVSDFPPPAGRELILRATVPRPAPYSKALPQRMYSVLTKEDFRLAGAFSSDTSFF</sequence>
<name>RB3GP_RAT</name>
<comment type="function">
    <text evidence="1">Catalytic subunit of the Rab3 GTPase-activating (Rab3GAP) complex composed of RAB3GAP1 and RAB3GAP2, which has GTPase-activating protein (GAP) activity towards various Rab3 subfamily members (RAB3A, RAB3B, RAB3C and RAB3D), RAB5A and RAB43, and guanine nucleotide exchange factor (GEF) activity towards RAB18. As part of the Rab3GAP complex, acts as a GAP for Rab3 proteins by converting active RAB3-GTP to the inactive form RAB3-GDP. Rab3 proteins are involved in regulated exocytosis of neurotransmitters and hormones. The Rab3GAP complex, acts as a GEF for RAB18 by promoting the conversion of inactive RAB18-GDP to the active form RAB18-GTP. Recruits and stabilizes RAB18 at the cis-Golgi membrane where RAB18 is most likely activated. Also involved in RAB18 recruitment at the endoplasmic reticulum (ER) membrane where it maintains proper ER structure. Required for normal eye and brain development. May participate in neurodevelopmental processes such as proliferation, migration and differentiation before synapse formation, and non-synaptic vesicular release of neurotransmitters.</text>
</comment>
<comment type="subunit">
    <text evidence="1 4 6">The Rab3 GTPase-activating complex is a heterodimer composed of Rab3gap1 and Rab3gap2 (PubMed:9733780). The Rab3 GTPase-activating complex interacts with DMXL2 (PubMed:11809763). Interacts with LMAN1 (By similarity).</text>
</comment>
<comment type="subcellular location">
    <subcellularLocation>
        <location evidence="6">Cytoplasm</location>
    </subcellularLocation>
    <subcellularLocation>
        <location evidence="1">Endoplasmic reticulum</location>
    </subcellularLocation>
    <subcellularLocation>
        <location evidence="1">Golgi apparatus</location>
        <location evidence="1">cis-Golgi network</location>
    </subcellularLocation>
    <text evidence="6">In neurons, it is enriched in the synaptic soluble fraction.</text>
</comment>
<comment type="similarity">
    <text evidence="7">Belongs to the Rab3-GAP catalytic subunit family.</text>
</comment>
<gene>
    <name evidence="8" type="primary">Rab3gap1</name>
    <name type="synonym">Rab3gap</name>
</gene>